<evidence type="ECO:0000250" key="1">
    <source>
        <dbReference type="UniProtKB" id="O13836"/>
    </source>
</evidence>
<evidence type="ECO:0000250" key="2">
    <source>
        <dbReference type="UniProtKB" id="O70348"/>
    </source>
</evidence>
<evidence type="ECO:0000250" key="3">
    <source>
        <dbReference type="UniProtKB" id="P53063"/>
    </source>
</evidence>
<evidence type="ECO:0000250" key="4">
    <source>
        <dbReference type="UniProtKB" id="Q06349"/>
    </source>
</evidence>
<evidence type="ECO:0000250" key="5">
    <source>
        <dbReference type="UniProtKB" id="Q5AAT0"/>
    </source>
</evidence>
<evidence type="ECO:0000256" key="6">
    <source>
        <dbReference type="SAM" id="MobiDB-lite"/>
    </source>
</evidence>
<evidence type="ECO:0000305" key="7"/>
<sequence>MTLQFPIQAPARYAGETEPVKRPREFACFSYDKDHKFRLDDSSMKWYYPPEIGTNLSHGYDTFIKHDDSVDEHLDSLLKTIADHEQQTGGPIDAHIVTWRGMLTKVGGSDASFLSLWFEMNATLYRLTFTSGYKFETLSTIPRPWGETTRDYIENRDNEVTNNKEQYCSVVRTGFGKSIVCLGGEVDAIWDAKPETPGKPINWVELKTTAEIHTHNDRFKFDRKLMRYWIQSFLLGVPKIIVGYRTQDGILSGVEEFSTLSMPQDVQRRKTAKWDGNVCIKFASLFLDWLRQSINDGGVWRIRRENKSDHIELFKVEEVGHGSIITDEFMNWRIKLSLNKDKPPGFEPSDAADAEPSMAEEPVPETASASGAY</sequence>
<comment type="function">
    <text evidence="1 2 4 5">Decapping enzyme for NAD-capped RNAs: specifically hydrolyzes the nicotinamide adenine dinucleotide (NAD) cap from a subset of RNAs by removing the entire NAD moiety from the 5'-end of an NAD-capped RNA (By similarity). The NAD-cap is present at the 5'-end of some RNAs and snoRNAs. In contrast to the canonical 5'-end N7 methylguanosine (m7G) cap, the NAD cap promotes mRNA decay (By similarity). Also acts as a non-canonical decapping enzyme that removes the entire cap structure of m7G capped or incompletely capped RNAs (By similarity). Has decapping activity toward incomplete 5'-end m7G cap mRNAs such as unmethylated 5'-end-capped RNA (cap0), while it has no activity toward 2'-O-ribose methylated m7G cap (cap1) (By similarity). Also possesses RNA 5'-pyrophosphohydrolase activity by hydrolyzing the 5'-end triphosphate to release pyrophosphates (By similarity). Stimulates exoribonuclease activity of Rat1, allowing it to degrade RNAs with stable secondary structure more effectively (By similarity).</text>
</comment>
<comment type="catalytic activity">
    <reaction evidence="1">
        <text>a 5'-end NAD(+)-phospho-ribonucleoside in mRNA + H2O = a 5'-end phospho-ribonucleoside in mRNA + NAD(+) + H(+)</text>
        <dbReference type="Rhea" id="RHEA:60880"/>
        <dbReference type="Rhea" id="RHEA-COMP:15692"/>
        <dbReference type="Rhea" id="RHEA-COMP:15698"/>
        <dbReference type="ChEBI" id="CHEBI:15377"/>
        <dbReference type="ChEBI" id="CHEBI:15378"/>
        <dbReference type="ChEBI" id="CHEBI:57540"/>
        <dbReference type="ChEBI" id="CHEBI:138282"/>
        <dbReference type="ChEBI" id="CHEBI:144029"/>
    </reaction>
    <physiologicalReaction direction="left-to-right" evidence="1">
        <dbReference type="Rhea" id="RHEA:60881"/>
    </physiologicalReaction>
</comment>
<comment type="catalytic activity">
    <reaction evidence="3">
        <text>a 5'-end (N(7)-methyl 5'-triphosphoguanosine)-ribonucleoside-ribonucleotide in mRNA + H2O = a (N(7)-methyl 5'-triphosphoguanosine)-nucleoside + a 5'-end phospho-ribonucleoside in mRNA + H(+)</text>
        <dbReference type="Rhea" id="RHEA:66928"/>
        <dbReference type="Rhea" id="RHEA-COMP:15692"/>
        <dbReference type="Rhea" id="RHEA-COMP:17313"/>
        <dbReference type="ChEBI" id="CHEBI:15377"/>
        <dbReference type="ChEBI" id="CHEBI:15378"/>
        <dbReference type="ChEBI" id="CHEBI:138282"/>
        <dbReference type="ChEBI" id="CHEBI:172876"/>
        <dbReference type="ChEBI" id="CHEBI:172877"/>
    </reaction>
    <physiologicalReaction direction="left-to-right" evidence="3">
        <dbReference type="Rhea" id="RHEA:66929"/>
    </physiologicalReaction>
</comment>
<comment type="catalytic activity">
    <reaction evidence="1">
        <text>a 5'-end triphospho-ribonucleoside in mRNA + H2O = a 5'-end phospho-ribonucleoside in mRNA + diphosphate + H(+)</text>
        <dbReference type="Rhea" id="RHEA:78683"/>
        <dbReference type="Rhea" id="RHEA-COMP:15692"/>
        <dbReference type="Rhea" id="RHEA-COMP:17164"/>
        <dbReference type="ChEBI" id="CHEBI:15377"/>
        <dbReference type="ChEBI" id="CHEBI:15378"/>
        <dbReference type="ChEBI" id="CHEBI:33019"/>
        <dbReference type="ChEBI" id="CHEBI:138282"/>
        <dbReference type="ChEBI" id="CHEBI:167618"/>
    </reaction>
    <physiologicalReaction direction="left-to-right" evidence="1">
        <dbReference type="Rhea" id="RHEA:78684"/>
    </physiologicalReaction>
</comment>
<comment type="cofactor">
    <cofactor evidence="5">
        <name>a divalent metal cation</name>
        <dbReference type="ChEBI" id="CHEBI:60240"/>
    </cofactor>
    <text evidence="5">Divalent metal cation.</text>
</comment>
<comment type="subunit">
    <text evidence="1">Interacts with RAT1; the interaction is direct, stabilizes RAT1 protein structure and stimulates its exoribonuclease activity (By similarity). The interaction also stimulates RAI1 pyrophosphohydrolase activity, probably by recruiting it to mRNA substrates (By similarity).</text>
</comment>
<comment type="subcellular location">
    <subcellularLocation>
        <location evidence="3">Nucleus</location>
    </subcellularLocation>
</comment>
<comment type="similarity">
    <text evidence="7">Belongs to the DXO/Dom3Z family.</text>
</comment>
<keyword id="KW-0378">Hydrolase</keyword>
<keyword id="KW-0479">Metal-binding</keyword>
<keyword id="KW-0507">mRNA processing</keyword>
<keyword id="KW-0540">Nuclease</keyword>
<keyword id="KW-0547">Nucleotide-binding</keyword>
<keyword id="KW-0539">Nucleus</keyword>
<keyword id="KW-1185">Reference proteome</keyword>
<keyword id="KW-0694">RNA-binding</keyword>
<accession>Q2GXY3</accession>
<dbReference type="EC" id="3.6.1.-" evidence="5 1"/>
<dbReference type="EMBL" id="CH408033">
    <property type="protein sequence ID" value="EAQ85918.1"/>
    <property type="molecule type" value="Genomic_DNA"/>
</dbReference>
<dbReference type="RefSeq" id="XP_001224827.1">
    <property type="nucleotide sequence ID" value="XM_001224826.1"/>
</dbReference>
<dbReference type="SMR" id="Q2GXY3"/>
<dbReference type="FunCoup" id="Q2GXY3">
    <property type="interactions" value="562"/>
</dbReference>
<dbReference type="STRING" id="306901.Q2GXY3"/>
<dbReference type="GeneID" id="4393258"/>
<dbReference type="VEuPathDB" id="FungiDB:CHGG_07171"/>
<dbReference type="eggNOG" id="KOG1982">
    <property type="taxonomic scope" value="Eukaryota"/>
</dbReference>
<dbReference type="HOGENOM" id="CLU_024877_4_1_1"/>
<dbReference type="InParanoid" id="Q2GXY3"/>
<dbReference type="OMA" id="VVTWRGH"/>
<dbReference type="OrthoDB" id="5853397at2759"/>
<dbReference type="Proteomes" id="UP000001056">
    <property type="component" value="Unassembled WGS sequence"/>
</dbReference>
<dbReference type="GO" id="GO:0005829">
    <property type="term" value="C:cytosol"/>
    <property type="evidence" value="ECO:0007669"/>
    <property type="project" value="TreeGrafter"/>
</dbReference>
<dbReference type="GO" id="GO:0005634">
    <property type="term" value="C:nucleus"/>
    <property type="evidence" value="ECO:0007669"/>
    <property type="project" value="UniProtKB-SubCell"/>
</dbReference>
<dbReference type="GO" id="GO:0046872">
    <property type="term" value="F:metal ion binding"/>
    <property type="evidence" value="ECO:0007669"/>
    <property type="project" value="UniProtKB-KW"/>
</dbReference>
<dbReference type="GO" id="GO:0034353">
    <property type="term" value="F:mRNA 5'-diphosphatase activity"/>
    <property type="evidence" value="ECO:0007669"/>
    <property type="project" value="TreeGrafter"/>
</dbReference>
<dbReference type="GO" id="GO:0004518">
    <property type="term" value="F:nuclease activity"/>
    <property type="evidence" value="ECO:0007669"/>
    <property type="project" value="UniProtKB-KW"/>
</dbReference>
<dbReference type="GO" id="GO:0000166">
    <property type="term" value="F:nucleotide binding"/>
    <property type="evidence" value="ECO:0007669"/>
    <property type="project" value="UniProtKB-KW"/>
</dbReference>
<dbReference type="GO" id="GO:0003723">
    <property type="term" value="F:RNA binding"/>
    <property type="evidence" value="ECO:0007669"/>
    <property type="project" value="UniProtKB-KW"/>
</dbReference>
<dbReference type="GO" id="GO:0110152">
    <property type="term" value="F:RNA NAD+-cap (NAD+-forming) hydrolase activity"/>
    <property type="evidence" value="ECO:0007669"/>
    <property type="project" value="RHEA"/>
</dbReference>
<dbReference type="GO" id="GO:0006397">
    <property type="term" value="P:mRNA processing"/>
    <property type="evidence" value="ECO:0007669"/>
    <property type="project" value="UniProtKB-KW"/>
</dbReference>
<dbReference type="GO" id="GO:0110155">
    <property type="term" value="P:NAD-cap decapping"/>
    <property type="evidence" value="ECO:0007669"/>
    <property type="project" value="TreeGrafter"/>
</dbReference>
<dbReference type="GO" id="GO:0000956">
    <property type="term" value="P:nuclear-transcribed mRNA catabolic process"/>
    <property type="evidence" value="ECO:0007669"/>
    <property type="project" value="TreeGrafter"/>
</dbReference>
<dbReference type="InterPro" id="IPR013961">
    <property type="entry name" value="RAI1"/>
</dbReference>
<dbReference type="InterPro" id="IPR039039">
    <property type="entry name" value="RAI1-like_fam"/>
</dbReference>
<dbReference type="PANTHER" id="PTHR12395:SF9">
    <property type="entry name" value="DECAPPING AND EXORIBONUCLEASE PROTEIN"/>
    <property type="match status" value="1"/>
</dbReference>
<dbReference type="PANTHER" id="PTHR12395">
    <property type="entry name" value="DOM-3 RELATED"/>
    <property type="match status" value="1"/>
</dbReference>
<dbReference type="Pfam" id="PF08652">
    <property type="entry name" value="RAI1"/>
    <property type="match status" value="2"/>
</dbReference>
<name>DXO_CHAGB</name>
<gene>
    <name type="primary">RAI1</name>
    <name type="ORF">CHGG_07171</name>
</gene>
<proteinExistence type="inferred from homology"/>
<feature type="chain" id="PRO_0000249830" description="Decapping nuclease RAI1">
    <location>
        <begin position="1"/>
        <end position="373"/>
    </location>
</feature>
<feature type="region of interest" description="Disordered" evidence="6">
    <location>
        <begin position="340"/>
        <end position="373"/>
    </location>
</feature>
<feature type="binding site" evidence="1">
    <location>
        <position position="136"/>
    </location>
    <ligand>
        <name>a divalent metal cation</name>
        <dbReference type="ChEBI" id="CHEBI:60240"/>
    </ligand>
</feature>
<feature type="binding site" evidence="2">
    <location>
        <position position="168"/>
    </location>
    <ligand>
        <name>substrate</name>
    </ligand>
</feature>
<feature type="binding site" evidence="2">
    <location>
        <position position="185"/>
    </location>
    <ligand>
        <name>substrate</name>
    </ligand>
</feature>
<feature type="binding site" evidence="1">
    <location>
        <position position="187"/>
    </location>
    <ligand>
        <name>a divalent metal cation</name>
        <dbReference type="ChEBI" id="CHEBI:60240"/>
    </ligand>
</feature>
<feature type="binding site" evidence="1">
    <location>
        <position position="205"/>
    </location>
    <ligand>
        <name>a divalent metal cation</name>
        <dbReference type="ChEBI" id="CHEBI:60240"/>
    </ligand>
</feature>
<feature type="binding site" evidence="1">
    <location>
        <position position="206"/>
    </location>
    <ligand>
        <name>a divalent metal cation</name>
        <dbReference type="ChEBI" id="CHEBI:60240"/>
    </ligand>
</feature>
<feature type="binding site" evidence="2">
    <location>
        <position position="207"/>
    </location>
    <ligand>
        <name>substrate</name>
    </ligand>
</feature>
<feature type="binding site" evidence="2">
    <location>
        <position position="231"/>
    </location>
    <ligand>
        <name>substrate</name>
    </ligand>
</feature>
<protein>
    <recommendedName>
        <fullName evidence="7">Decapping nuclease RAI1</fullName>
        <ecNumber evidence="5">3.6.1.-</ecNumber>
    </recommendedName>
    <alternativeName>
        <fullName evidence="7">NAD-capped RNA hydrolase RAI1</fullName>
        <shortName evidence="7">DeNADding enzyme RAI1</shortName>
        <ecNumber evidence="1">3.6.1.-</ecNumber>
    </alternativeName>
</protein>
<organism>
    <name type="scientific">Chaetomium globosum (strain ATCC 6205 / CBS 148.51 / DSM 1962 / NBRC 6347 / NRRL 1970)</name>
    <name type="common">Soil fungus</name>
    <dbReference type="NCBI Taxonomy" id="306901"/>
    <lineage>
        <taxon>Eukaryota</taxon>
        <taxon>Fungi</taxon>
        <taxon>Dikarya</taxon>
        <taxon>Ascomycota</taxon>
        <taxon>Pezizomycotina</taxon>
        <taxon>Sordariomycetes</taxon>
        <taxon>Sordariomycetidae</taxon>
        <taxon>Sordariales</taxon>
        <taxon>Chaetomiaceae</taxon>
        <taxon>Chaetomium</taxon>
    </lineage>
</organism>
<reference key="1">
    <citation type="journal article" date="2015" name="Genome Announc.">
        <title>Draft genome sequence of the cellulolytic fungus Chaetomium globosum.</title>
        <authorList>
            <person name="Cuomo C.A."/>
            <person name="Untereiner W.A."/>
            <person name="Ma L.-J."/>
            <person name="Grabherr M."/>
            <person name="Birren B.W."/>
        </authorList>
    </citation>
    <scope>NUCLEOTIDE SEQUENCE [LARGE SCALE GENOMIC DNA]</scope>
    <source>
        <strain>ATCC 6205 / CBS 148.51 / DSM 1962 / NBRC 6347 / NRRL 1970</strain>
    </source>
</reference>